<proteinExistence type="inferred from homology"/>
<name>FOLD_TREPA</name>
<organism>
    <name type="scientific">Treponema pallidum (strain Nichols)</name>
    <dbReference type="NCBI Taxonomy" id="243276"/>
    <lineage>
        <taxon>Bacteria</taxon>
        <taxon>Pseudomonadati</taxon>
        <taxon>Spirochaetota</taxon>
        <taxon>Spirochaetia</taxon>
        <taxon>Spirochaetales</taxon>
        <taxon>Treponemataceae</taxon>
        <taxon>Treponema</taxon>
    </lineage>
</organism>
<dbReference type="EC" id="1.5.1.5" evidence="1"/>
<dbReference type="EC" id="3.5.4.9" evidence="1"/>
<dbReference type="EMBL" id="AE000520">
    <property type="protein sequence ID" value="AAC65701.1"/>
    <property type="molecule type" value="Genomic_DNA"/>
</dbReference>
<dbReference type="PIR" id="A71288">
    <property type="entry name" value="A71288"/>
</dbReference>
<dbReference type="RefSeq" id="WP_010882177.1">
    <property type="nucleotide sequence ID" value="NC_021490.2"/>
</dbReference>
<dbReference type="SMR" id="O83714"/>
<dbReference type="STRING" id="243276.TP_0732"/>
<dbReference type="EnsemblBacteria" id="AAC65701">
    <property type="protein sequence ID" value="AAC65701"/>
    <property type="gene ID" value="TP_0732"/>
</dbReference>
<dbReference type="KEGG" id="tpa:TP_0732"/>
<dbReference type="KEGG" id="tpw:TPANIC_0732"/>
<dbReference type="eggNOG" id="COG0190">
    <property type="taxonomic scope" value="Bacteria"/>
</dbReference>
<dbReference type="HOGENOM" id="CLU_034045_2_1_12"/>
<dbReference type="OrthoDB" id="9803580at2"/>
<dbReference type="UniPathway" id="UPA00193"/>
<dbReference type="Proteomes" id="UP000000811">
    <property type="component" value="Chromosome"/>
</dbReference>
<dbReference type="GO" id="GO:0005829">
    <property type="term" value="C:cytosol"/>
    <property type="evidence" value="ECO:0007669"/>
    <property type="project" value="TreeGrafter"/>
</dbReference>
<dbReference type="GO" id="GO:0004477">
    <property type="term" value="F:methenyltetrahydrofolate cyclohydrolase activity"/>
    <property type="evidence" value="ECO:0007669"/>
    <property type="project" value="UniProtKB-UniRule"/>
</dbReference>
<dbReference type="GO" id="GO:0004488">
    <property type="term" value="F:methylenetetrahydrofolate dehydrogenase (NADP+) activity"/>
    <property type="evidence" value="ECO:0007669"/>
    <property type="project" value="UniProtKB-UniRule"/>
</dbReference>
<dbReference type="GO" id="GO:0000105">
    <property type="term" value="P:L-histidine biosynthetic process"/>
    <property type="evidence" value="ECO:0007669"/>
    <property type="project" value="UniProtKB-KW"/>
</dbReference>
<dbReference type="GO" id="GO:0009086">
    <property type="term" value="P:methionine biosynthetic process"/>
    <property type="evidence" value="ECO:0007669"/>
    <property type="project" value="UniProtKB-KW"/>
</dbReference>
<dbReference type="GO" id="GO:0006164">
    <property type="term" value="P:purine nucleotide biosynthetic process"/>
    <property type="evidence" value="ECO:0007669"/>
    <property type="project" value="UniProtKB-KW"/>
</dbReference>
<dbReference type="GO" id="GO:0035999">
    <property type="term" value="P:tetrahydrofolate interconversion"/>
    <property type="evidence" value="ECO:0007669"/>
    <property type="project" value="UniProtKB-UniRule"/>
</dbReference>
<dbReference type="CDD" id="cd01080">
    <property type="entry name" value="NAD_bind_m-THF_DH_Cyclohyd"/>
    <property type="match status" value="1"/>
</dbReference>
<dbReference type="FunFam" id="3.40.50.720:FF:000006">
    <property type="entry name" value="Bifunctional protein FolD"/>
    <property type="match status" value="1"/>
</dbReference>
<dbReference type="FunFam" id="3.40.50.10860:FF:000005">
    <property type="entry name" value="C-1-tetrahydrofolate synthase, cytoplasmic, putative"/>
    <property type="match status" value="1"/>
</dbReference>
<dbReference type="Gene3D" id="3.40.50.10860">
    <property type="entry name" value="Leucine Dehydrogenase, chain A, domain 1"/>
    <property type="match status" value="1"/>
</dbReference>
<dbReference type="Gene3D" id="3.40.50.720">
    <property type="entry name" value="NAD(P)-binding Rossmann-like Domain"/>
    <property type="match status" value="1"/>
</dbReference>
<dbReference type="HAMAP" id="MF_01576">
    <property type="entry name" value="THF_DHG_CYH"/>
    <property type="match status" value="1"/>
</dbReference>
<dbReference type="InterPro" id="IPR046346">
    <property type="entry name" value="Aminoacid_DH-like_N_sf"/>
</dbReference>
<dbReference type="InterPro" id="IPR036291">
    <property type="entry name" value="NAD(P)-bd_dom_sf"/>
</dbReference>
<dbReference type="InterPro" id="IPR000672">
    <property type="entry name" value="THF_DH/CycHdrlase"/>
</dbReference>
<dbReference type="InterPro" id="IPR020630">
    <property type="entry name" value="THF_DH/CycHdrlase_cat_dom"/>
</dbReference>
<dbReference type="InterPro" id="IPR020867">
    <property type="entry name" value="THF_DH/CycHdrlase_CS"/>
</dbReference>
<dbReference type="InterPro" id="IPR020631">
    <property type="entry name" value="THF_DH/CycHdrlase_NAD-bd_dom"/>
</dbReference>
<dbReference type="PANTHER" id="PTHR48099:SF5">
    <property type="entry name" value="C-1-TETRAHYDROFOLATE SYNTHASE, CYTOPLASMIC"/>
    <property type="match status" value="1"/>
</dbReference>
<dbReference type="PANTHER" id="PTHR48099">
    <property type="entry name" value="C-1-TETRAHYDROFOLATE SYNTHASE, CYTOPLASMIC-RELATED"/>
    <property type="match status" value="1"/>
</dbReference>
<dbReference type="Pfam" id="PF00763">
    <property type="entry name" value="THF_DHG_CYH"/>
    <property type="match status" value="1"/>
</dbReference>
<dbReference type="Pfam" id="PF02882">
    <property type="entry name" value="THF_DHG_CYH_C"/>
    <property type="match status" value="1"/>
</dbReference>
<dbReference type="PRINTS" id="PR00085">
    <property type="entry name" value="THFDHDRGNASE"/>
</dbReference>
<dbReference type="SUPFAM" id="SSF53223">
    <property type="entry name" value="Aminoacid dehydrogenase-like, N-terminal domain"/>
    <property type="match status" value="1"/>
</dbReference>
<dbReference type="SUPFAM" id="SSF51735">
    <property type="entry name" value="NAD(P)-binding Rossmann-fold domains"/>
    <property type="match status" value="1"/>
</dbReference>
<dbReference type="PROSITE" id="PS00767">
    <property type="entry name" value="THF_DHG_CYH_2"/>
    <property type="match status" value="1"/>
</dbReference>
<accession>O83714</accession>
<feature type="chain" id="PRO_0000268552" description="Bifunctional protein FolD">
    <location>
        <begin position="1"/>
        <end position="315"/>
    </location>
</feature>
<feature type="binding site" evidence="1">
    <location>
        <begin position="166"/>
        <end position="168"/>
    </location>
    <ligand>
        <name>NADP(+)</name>
        <dbReference type="ChEBI" id="CHEBI:58349"/>
    </ligand>
</feature>
<feature type="binding site" evidence="1">
    <location>
        <position position="193"/>
    </location>
    <ligand>
        <name>NADP(+)</name>
        <dbReference type="ChEBI" id="CHEBI:58349"/>
    </ligand>
</feature>
<feature type="binding site" evidence="1">
    <location>
        <position position="234"/>
    </location>
    <ligand>
        <name>NADP(+)</name>
        <dbReference type="ChEBI" id="CHEBI:58349"/>
    </ligand>
</feature>
<evidence type="ECO:0000255" key="1">
    <source>
        <dbReference type="HAMAP-Rule" id="MF_01576"/>
    </source>
</evidence>
<comment type="function">
    <text evidence="1">Catalyzes the oxidation of 5,10-methylenetetrahydrofolate to 5,10-methenyltetrahydrofolate and then the hydrolysis of 5,10-methenyltetrahydrofolate to 10-formyltetrahydrofolate.</text>
</comment>
<comment type="catalytic activity">
    <reaction evidence="1">
        <text>(6R)-5,10-methylene-5,6,7,8-tetrahydrofolate + NADP(+) = (6R)-5,10-methenyltetrahydrofolate + NADPH</text>
        <dbReference type="Rhea" id="RHEA:22812"/>
        <dbReference type="ChEBI" id="CHEBI:15636"/>
        <dbReference type="ChEBI" id="CHEBI:57455"/>
        <dbReference type="ChEBI" id="CHEBI:57783"/>
        <dbReference type="ChEBI" id="CHEBI:58349"/>
        <dbReference type="EC" id="1.5.1.5"/>
    </reaction>
</comment>
<comment type="catalytic activity">
    <reaction evidence="1">
        <text>(6R)-5,10-methenyltetrahydrofolate + H2O = (6R)-10-formyltetrahydrofolate + H(+)</text>
        <dbReference type="Rhea" id="RHEA:23700"/>
        <dbReference type="ChEBI" id="CHEBI:15377"/>
        <dbReference type="ChEBI" id="CHEBI:15378"/>
        <dbReference type="ChEBI" id="CHEBI:57455"/>
        <dbReference type="ChEBI" id="CHEBI:195366"/>
        <dbReference type="EC" id="3.5.4.9"/>
    </reaction>
</comment>
<comment type="pathway">
    <text evidence="1">One-carbon metabolism; tetrahydrofolate interconversion.</text>
</comment>
<comment type="subunit">
    <text evidence="1">Homodimer.</text>
</comment>
<comment type="similarity">
    <text evidence="1">Belongs to the tetrahydrofolate dehydrogenase/cyclohydrolase family.</text>
</comment>
<sequence length="315" mass="32819">MDARLIDGKQAAHECTARLATRVQALRAAVGTAPFLAAVLVGDDPASCTYVAAKQRALARAHLRGETHRLPAHASHAQVLELIARLNEDARVHGILIQLPLPAHLDAARVCRAVAPEKDVDGFHPLNCGALFLAQPGFVPCTPAGIVHLLRRAQVPLAGARVVIVGRSAIVGRPLAVLLASPGCDATVTLCHSHTRGLADICVQADILVAALGKARFIGAPFVRTGAVVIDVGIHHVPDATAPRGRRLCGDVDFDAVAHKVQAITPVPGGVGPMTIAMLLHNTLCAAEYAAGMIPPFRAALYADLDGRAAGDVPH</sequence>
<gene>
    <name evidence="1" type="primary">folD</name>
    <name type="ordered locus">TP_0732</name>
</gene>
<keyword id="KW-0028">Amino-acid biosynthesis</keyword>
<keyword id="KW-0368">Histidine biosynthesis</keyword>
<keyword id="KW-0378">Hydrolase</keyword>
<keyword id="KW-0486">Methionine biosynthesis</keyword>
<keyword id="KW-0511">Multifunctional enzyme</keyword>
<keyword id="KW-0521">NADP</keyword>
<keyword id="KW-0554">One-carbon metabolism</keyword>
<keyword id="KW-0560">Oxidoreductase</keyword>
<keyword id="KW-0658">Purine biosynthesis</keyword>
<keyword id="KW-1185">Reference proteome</keyword>
<reference key="1">
    <citation type="journal article" date="1998" name="Science">
        <title>Complete genome sequence of Treponema pallidum, the syphilis spirochete.</title>
        <authorList>
            <person name="Fraser C.M."/>
            <person name="Norris S.J."/>
            <person name="Weinstock G.M."/>
            <person name="White O."/>
            <person name="Sutton G.G."/>
            <person name="Dodson R.J."/>
            <person name="Gwinn M.L."/>
            <person name="Hickey E.K."/>
            <person name="Clayton R.A."/>
            <person name="Ketchum K.A."/>
            <person name="Sodergren E."/>
            <person name="Hardham J.M."/>
            <person name="McLeod M.P."/>
            <person name="Salzberg S.L."/>
            <person name="Peterson J.D."/>
            <person name="Khalak H.G."/>
            <person name="Richardson D.L."/>
            <person name="Howell J.K."/>
            <person name="Chidambaram M."/>
            <person name="Utterback T.R."/>
            <person name="McDonald L.A."/>
            <person name="Artiach P."/>
            <person name="Bowman C."/>
            <person name="Cotton M.D."/>
            <person name="Fujii C."/>
            <person name="Garland S.A."/>
            <person name="Hatch B."/>
            <person name="Horst K."/>
            <person name="Roberts K.M."/>
            <person name="Sandusky M."/>
            <person name="Weidman J.F."/>
            <person name="Smith H.O."/>
            <person name="Venter J.C."/>
        </authorList>
    </citation>
    <scope>NUCLEOTIDE SEQUENCE [LARGE SCALE GENOMIC DNA]</scope>
    <source>
        <strain>Nichols</strain>
    </source>
</reference>
<protein>
    <recommendedName>
        <fullName evidence="1">Bifunctional protein FolD</fullName>
    </recommendedName>
    <domain>
        <recommendedName>
            <fullName evidence="1">Methylenetetrahydrofolate dehydrogenase</fullName>
            <ecNumber evidence="1">1.5.1.5</ecNumber>
        </recommendedName>
    </domain>
    <domain>
        <recommendedName>
            <fullName evidence="1">Methenyltetrahydrofolate cyclohydrolase</fullName>
            <ecNumber evidence="1">3.5.4.9</ecNumber>
        </recommendedName>
    </domain>
</protein>